<sequence>MIEHGNSTFDYRSIREVAANAGAGATAGAIAATFVCPLDVIKTRLQVLGLPEAPASGQRGGVIITSLKNIIKEEGYRGMYRGLSPTIIALLPNWAVYFSVYGKLKDVLQSSDGKLSIGSNMIAAAGAGAATSIATNPLWVVKTRLMTQGIRPGVVPYKSVMSAFSRICHEEGVRGLYSGILPSLAGVSHVAIQFPAYEKIKQYMAKMDNTSVENLSPGNVAIASSIAKVIASILTYPHEVIRAKLQEQGQIRNAETKYSGVIDCITKVFRSEGIPGLYRGCATNLLRTTPSAVITFTTYEMMLRFFRQVVPPETNRSDDRRREEERKNLVSRRGEEEDKDLGLRESQTQSNKISTPHIPLGSK</sequence>
<name>NDT2_ARATH</name>
<evidence type="ECO:0000255" key="1"/>
<evidence type="ECO:0000256" key="2">
    <source>
        <dbReference type="SAM" id="MobiDB-lite"/>
    </source>
</evidence>
<evidence type="ECO:0000269" key="3">
    <source>
    </source>
</evidence>
<evidence type="ECO:0000269" key="4">
    <source>
    </source>
</evidence>
<evidence type="ECO:0000305" key="5"/>
<reference key="1">
    <citation type="journal article" date="2005" name="J. Biol. Chem.">
        <title>Folate metabolism in plants: an Arabidopsis homolog of the mammalian mitochondrial folate transporter mediates folate import into chloroplasts.</title>
        <authorList>
            <person name="Bedhomme M."/>
            <person name="Hoffmann M."/>
            <person name="McCarthy E.A."/>
            <person name="Gambonnet B."/>
            <person name="Moran R.G."/>
            <person name="Rebeille F."/>
            <person name="Ravanel S."/>
        </authorList>
    </citation>
    <scope>NUCLEOTIDE SEQUENCE [MRNA]</scope>
    <scope>FUNCTION</scope>
    <source>
        <strain>cv. Wassilewskija</strain>
    </source>
</reference>
<reference key="2">
    <citation type="journal article" date="2009" name="J. Biol. Chem.">
        <title>Molecular identification and functional characterization of Arabidopsis thaliana mitochondrial and chloroplastic NAD+ carrier proteins.</title>
        <authorList>
            <person name="Palmieri F."/>
            <person name="Rieder B."/>
            <person name="Ventrella A."/>
            <person name="Blanco E."/>
            <person name="Do P.T."/>
            <person name="Nunes-Nesi A."/>
            <person name="Trauth A.U."/>
            <person name="Fiermonte G."/>
            <person name="Tjaden J."/>
            <person name="Agrimi G."/>
            <person name="Kirchberger S."/>
            <person name="Paradies E."/>
            <person name="Fernie A.R."/>
            <person name="Neuhaus H.E."/>
        </authorList>
    </citation>
    <scope>NUCLEOTIDE SEQUENCE [MRNA]</scope>
    <scope>FUNCTION</scope>
    <scope>SUBSTRATE SPECIFICITY</scope>
    <scope>ACTIVITY REGULATION</scope>
    <scope>BIOPHYSICOCHEMICAL PROPERTIES</scope>
    <scope>SUBCELLULAR LOCATION</scope>
    <scope>TISSUE SPECIFICITY</scope>
</reference>
<reference key="3">
    <citation type="journal article" date="2000" name="Nature">
        <title>Sequence and analysis of chromosome 1 of the plant Arabidopsis thaliana.</title>
        <authorList>
            <person name="Theologis A."/>
            <person name="Ecker J.R."/>
            <person name="Palm C.J."/>
            <person name="Federspiel N.A."/>
            <person name="Kaul S."/>
            <person name="White O."/>
            <person name="Alonso J."/>
            <person name="Altafi H."/>
            <person name="Araujo R."/>
            <person name="Bowman C.L."/>
            <person name="Brooks S.Y."/>
            <person name="Buehler E."/>
            <person name="Chan A."/>
            <person name="Chao Q."/>
            <person name="Chen H."/>
            <person name="Cheuk R.F."/>
            <person name="Chin C.W."/>
            <person name="Chung M.K."/>
            <person name="Conn L."/>
            <person name="Conway A.B."/>
            <person name="Conway A.R."/>
            <person name="Creasy T.H."/>
            <person name="Dewar K."/>
            <person name="Dunn P."/>
            <person name="Etgu P."/>
            <person name="Feldblyum T.V."/>
            <person name="Feng J.-D."/>
            <person name="Fong B."/>
            <person name="Fujii C.Y."/>
            <person name="Gill J.E."/>
            <person name="Goldsmith A.D."/>
            <person name="Haas B."/>
            <person name="Hansen N.F."/>
            <person name="Hughes B."/>
            <person name="Huizar L."/>
            <person name="Hunter J.L."/>
            <person name="Jenkins J."/>
            <person name="Johnson-Hopson C."/>
            <person name="Khan S."/>
            <person name="Khaykin E."/>
            <person name="Kim C.J."/>
            <person name="Koo H.L."/>
            <person name="Kremenetskaia I."/>
            <person name="Kurtz D.B."/>
            <person name="Kwan A."/>
            <person name="Lam B."/>
            <person name="Langin-Hooper S."/>
            <person name="Lee A."/>
            <person name="Lee J.M."/>
            <person name="Lenz C.A."/>
            <person name="Li J.H."/>
            <person name="Li Y.-P."/>
            <person name="Lin X."/>
            <person name="Liu S.X."/>
            <person name="Liu Z.A."/>
            <person name="Luros J.S."/>
            <person name="Maiti R."/>
            <person name="Marziali A."/>
            <person name="Militscher J."/>
            <person name="Miranda M."/>
            <person name="Nguyen M."/>
            <person name="Nierman W.C."/>
            <person name="Osborne B.I."/>
            <person name="Pai G."/>
            <person name="Peterson J."/>
            <person name="Pham P.K."/>
            <person name="Rizzo M."/>
            <person name="Rooney T."/>
            <person name="Rowley D."/>
            <person name="Sakano H."/>
            <person name="Salzberg S.L."/>
            <person name="Schwartz J.R."/>
            <person name="Shinn P."/>
            <person name="Southwick A.M."/>
            <person name="Sun H."/>
            <person name="Tallon L.J."/>
            <person name="Tambunga G."/>
            <person name="Toriumi M.J."/>
            <person name="Town C.D."/>
            <person name="Utterback T."/>
            <person name="Van Aken S."/>
            <person name="Vaysberg M."/>
            <person name="Vysotskaia V.S."/>
            <person name="Walker M."/>
            <person name="Wu D."/>
            <person name="Yu G."/>
            <person name="Fraser C.M."/>
            <person name="Venter J.C."/>
            <person name="Davis R.W."/>
        </authorList>
    </citation>
    <scope>NUCLEOTIDE SEQUENCE [LARGE SCALE GENOMIC DNA]</scope>
    <source>
        <strain>cv. Columbia</strain>
    </source>
</reference>
<reference key="4">
    <citation type="journal article" date="2017" name="Plant J.">
        <title>Araport11: a complete reannotation of the Arabidopsis thaliana reference genome.</title>
        <authorList>
            <person name="Cheng C.Y."/>
            <person name="Krishnakumar V."/>
            <person name="Chan A.P."/>
            <person name="Thibaud-Nissen F."/>
            <person name="Schobel S."/>
            <person name="Town C.D."/>
        </authorList>
    </citation>
    <scope>GENOME REANNOTATION</scope>
    <source>
        <strain>cv. Columbia</strain>
    </source>
</reference>
<reference key="5">
    <citation type="journal article" date="2003" name="Science">
        <title>Empirical analysis of transcriptional activity in the Arabidopsis genome.</title>
        <authorList>
            <person name="Yamada K."/>
            <person name="Lim J."/>
            <person name="Dale J.M."/>
            <person name="Chen H."/>
            <person name="Shinn P."/>
            <person name="Palm C.J."/>
            <person name="Southwick A.M."/>
            <person name="Wu H.C."/>
            <person name="Kim C.J."/>
            <person name="Nguyen M."/>
            <person name="Pham P.K."/>
            <person name="Cheuk R.F."/>
            <person name="Karlin-Newmann G."/>
            <person name="Liu S.X."/>
            <person name="Lam B."/>
            <person name="Sakano H."/>
            <person name="Wu T."/>
            <person name="Yu G."/>
            <person name="Miranda M."/>
            <person name="Quach H.L."/>
            <person name="Tripp M."/>
            <person name="Chang C.H."/>
            <person name="Lee J.M."/>
            <person name="Toriumi M.J."/>
            <person name="Chan M.M."/>
            <person name="Tang C.C."/>
            <person name="Onodera C.S."/>
            <person name="Deng J.M."/>
            <person name="Akiyama K."/>
            <person name="Ansari Y."/>
            <person name="Arakawa T."/>
            <person name="Banh J."/>
            <person name="Banno F."/>
            <person name="Bowser L."/>
            <person name="Brooks S.Y."/>
            <person name="Carninci P."/>
            <person name="Chao Q."/>
            <person name="Choy N."/>
            <person name="Enju A."/>
            <person name="Goldsmith A.D."/>
            <person name="Gurjal M."/>
            <person name="Hansen N.F."/>
            <person name="Hayashizaki Y."/>
            <person name="Johnson-Hopson C."/>
            <person name="Hsuan V.W."/>
            <person name="Iida K."/>
            <person name="Karnes M."/>
            <person name="Khan S."/>
            <person name="Koesema E."/>
            <person name="Ishida J."/>
            <person name="Jiang P.X."/>
            <person name="Jones T."/>
            <person name="Kawai J."/>
            <person name="Kamiya A."/>
            <person name="Meyers C."/>
            <person name="Nakajima M."/>
            <person name="Narusaka M."/>
            <person name="Seki M."/>
            <person name="Sakurai T."/>
            <person name="Satou M."/>
            <person name="Tamse R."/>
            <person name="Vaysberg M."/>
            <person name="Wallender E.K."/>
            <person name="Wong C."/>
            <person name="Yamamura Y."/>
            <person name="Yuan S."/>
            <person name="Shinozaki K."/>
            <person name="Davis R.W."/>
            <person name="Theologis A."/>
            <person name="Ecker J.R."/>
        </authorList>
    </citation>
    <scope>NUCLEOTIDE SEQUENCE [LARGE SCALE MRNA]</scope>
    <source>
        <strain>cv. Columbia</strain>
    </source>
</reference>
<feature type="chain" id="PRO_0000420696" description="Nicotinamide adenine dinucleotide transporter 2, mitochondrial">
    <location>
        <begin position="1"/>
        <end position="363"/>
    </location>
</feature>
<feature type="transmembrane region" description="Helical; Name=1" evidence="1">
    <location>
        <begin position="21"/>
        <end position="41"/>
    </location>
</feature>
<feature type="transmembrane region" description="Helical; Name=2" evidence="1">
    <location>
        <begin position="82"/>
        <end position="102"/>
    </location>
</feature>
<feature type="transmembrane region" description="Helical; Name=3" evidence="1">
    <location>
        <begin position="121"/>
        <end position="141"/>
    </location>
</feature>
<feature type="transmembrane region" description="Helical; Name=4" evidence="1">
    <location>
        <begin position="176"/>
        <end position="196"/>
    </location>
</feature>
<feature type="transmembrane region" description="Helical; Name=5" evidence="1">
    <location>
        <begin position="215"/>
        <end position="235"/>
    </location>
</feature>
<feature type="transmembrane region" description="Helical; Name=6" evidence="1">
    <location>
        <begin position="277"/>
        <end position="299"/>
    </location>
</feature>
<feature type="repeat" description="Solcar 1">
    <location>
        <begin position="15"/>
        <end position="107"/>
    </location>
</feature>
<feature type="repeat" description="Solcar 2">
    <location>
        <begin position="115"/>
        <end position="203"/>
    </location>
</feature>
<feature type="repeat" description="Solcar 3">
    <location>
        <begin position="215"/>
        <end position="305"/>
    </location>
</feature>
<feature type="region of interest" description="Disordered" evidence="2">
    <location>
        <begin position="313"/>
        <end position="363"/>
    </location>
</feature>
<feature type="compositionally biased region" description="Basic and acidic residues" evidence="2">
    <location>
        <begin position="315"/>
        <end position="343"/>
    </location>
</feature>
<feature type="compositionally biased region" description="Polar residues" evidence="2">
    <location>
        <begin position="345"/>
        <end position="354"/>
    </location>
</feature>
<feature type="sequence conflict" description="In Ref. 1; CAI38581." evidence="5" ref="1">
    <original>S</original>
    <variation>L</variation>
    <location>
        <position position="84"/>
    </location>
</feature>
<comment type="function">
    <text evidence="3 4">Mediates the NAD(+) import into chloroplast. Favors the NAD(+)(in)/ADP or AMP(out) antiport exchange, but is also able to catalyze a low unidirectional transport (uniport) of NAD(+). Transports NAD(+), nicotinic acid adenine dinucleotide, nicotinamide mononucleotide, nicotinic acid mononucleotide, FAD, FMN, TTP, TDP, TMP, UTP, UDP, UMP, CTP, CDP, CMP, GTP, GDP, GMP, 3'-AMP, ATP, ADP and AMP, has low transport activity with cAMP, NADH and alpha-NAD(+), and has no activity with NADP(+), NADPH, nicotinamide, nicotinic acid, adenosine, thiamine mono- or diphosphate, inorganic phosphate, CoA, folate, NaCl, malate, malonate, citrate, fumarate, aspartate, glutamate, S-adenosylmethionine, lysine, arginine, and ornithine.</text>
</comment>
<comment type="activity regulation">
    <text evidence="4">Inhibited by pyridoxal 5'-phosphate, bathophenanthroline, tannic acid, mersalyl, mercuric chloride, p-hydroxymercuribenzoate, p-hydroxymercuribenzoate sulfonate, bromocresol purple and N-ethylmaleimide.</text>
</comment>
<comment type="biophysicochemical properties">
    <kinetics>
        <KM evidence="4">0.15 mM for the NAD(+)/NAD(+) exchange</KM>
        <Vmax evidence="4">4.76 mmol/min/g enzyme for the NAD(+)/NAD(+) exchange</Vmax>
    </kinetics>
</comment>
<comment type="subcellular location">
    <subcellularLocation>
        <location evidence="5">Mitochondrion membrane</location>
        <topology evidence="5">Multi-pass membrane protein</topology>
    </subcellularLocation>
</comment>
<comment type="tissue specificity">
    <text evidence="4">Highly expressed in young meristematic shoot area, vascular bundles of leaves, developing siliques including the funiculi, petal veins, developing pollen and central cylinder of roots.</text>
</comment>
<comment type="miscellaneous">
    <text>Appears to be a mitochondrial envelope-located membrane protein lacking an N-terminal-located transit peptide.</text>
</comment>
<comment type="similarity">
    <text evidence="5">Belongs to the mitochondrial carrier (TC 2.A.29) family.</text>
</comment>
<comment type="sequence caution" evidence="5">
    <conflict type="erroneous gene model prediction">
        <sequence resource="EMBL-CDS" id="AAG28807"/>
    </conflict>
</comment>
<comment type="sequence caution" evidence="5">
    <conflict type="erroneous gene model prediction">
        <sequence resource="EMBL-CDS" id="AAG50815"/>
    </conflict>
</comment>
<protein>
    <recommendedName>
        <fullName>Nicotinamide adenine dinucleotide transporter 2, mitochondrial</fullName>
        <shortName>AtNDT2</shortName>
    </recommendedName>
    <alternativeName>
        <fullName>NAD(+) transporter 2</fullName>
    </alternativeName>
</protein>
<keyword id="KW-0050">Antiport</keyword>
<keyword id="KW-0472">Membrane</keyword>
<keyword id="KW-0496">Mitochondrion</keyword>
<keyword id="KW-1185">Reference proteome</keyword>
<keyword id="KW-0677">Repeat</keyword>
<keyword id="KW-0812">Transmembrane</keyword>
<keyword id="KW-1133">Transmembrane helix</keyword>
<keyword id="KW-0813">Transport</keyword>
<organism>
    <name type="scientific">Arabidopsis thaliana</name>
    <name type="common">Mouse-ear cress</name>
    <dbReference type="NCBI Taxonomy" id="3702"/>
    <lineage>
        <taxon>Eukaryota</taxon>
        <taxon>Viridiplantae</taxon>
        <taxon>Streptophyta</taxon>
        <taxon>Embryophyta</taxon>
        <taxon>Tracheophyta</taxon>
        <taxon>Spermatophyta</taxon>
        <taxon>Magnoliopsida</taxon>
        <taxon>eudicotyledons</taxon>
        <taxon>Gunneridae</taxon>
        <taxon>Pentapetalae</taxon>
        <taxon>rosids</taxon>
        <taxon>malvids</taxon>
        <taxon>Brassicales</taxon>
        <taxon>Brassicaceae</taxon>
        <taxon>Camelineae</taxon>
        <taxon>Arabidopsis</taxon>
    </lineage>
</organism>
<dbReference type="EMBL" id="AJ871010">
    <property type="protein sequence ID" value="CAI38581.1"/>
    <property type="molecule type" value="mRNA"/>
</dbReference>
<dbReference type="EMBL" id="FM211594">
    <property type="protein sequence ID" value="CAR70089.1"/>
    <property type="molecule type" value="mRNA"/>
</dbReference>
<dbReference type="EMBL" id="AC079281">
    <property type="protein sequence ID" value="AAG50815.1"/>
    <property type="status" value="ALT_SEQ"/>
    <property type="molecule type" value="Genomic_DNA"/>
</dbReference>
<dbReference type="EMBL" id="AC079374">
    <property type="protein sequence ID" value="AAG28807.1"/>
    <property type="status" value="ALT_SEQ"/>
    <property type="molecule type" value="Genomic_DNA"/>
</dbReference>
<dbReference type="EMBL" id="CP002684">
    <property type="protein sequence ID" value="AEE30615.1"/>
    <property type="molecule type" value="Genomic_DNA"/>
</dbReference>
<dbReference type="EMBL" id="CP002684">
    <property type="protein sequence ID" value="ANM58659.1"/>
    <property type="molecule type" value="Genomic_DNA"/>
</dbReference>
<dbReference type="EMBL" id="AY093232">
    <property type="protein sequence ID" value="AAM13231.1"/>
    <property type="molecule type" value="mRNA"/>
</dbReference>
<dbReference type="EMBL" id="BT008746">
    <property type="protein sequence ID" value="AAP42759.1"/>
    <property type="molecule type" value="mRNA"/>
</dbReference>
<dbReference type="PIR" id="G86383">
    <property type="entry name" value="G86383"/>
</dbReference>
<dbReference type="RefSeq" id="NP_001321077.1">
    <property type="nucleotide sequence ID" value="NM_001332677.1"/>
</dbReference>
<dbReference type="RefSeq" id="NP_564233.1">
    <property type="nucleotide sequence ID" value="NM_102349.4"/>
</dbReference>
<dbReference type="SMR" id="Q8RWA5"/>
<dbReference type="BioGRID" id="24361">
    <property type="interactions" value="1"/>
</dbReference>
<dbReference type="FunCoup" id="Q8RWA5">
    <property type="interactions" value="1753"/>
</dbReference>
<dbReference type="IntAct" id="Q8RWA5">
    <property type="interactions" value="1"/>
</dbReference>
<dbReference type="STRING" id="3702.Q8RWA5"/>
<dbReference type="TCDB" id="2.A.29.10.10">
    <property type="family name" value="the mitochondrial carrier (mc) family"/>
</dbReference>
<dbReference type="PaxDb" id="3702-AT1G25380.1"/>
<dbReference type="ProteomicsDB" id="251101"/>
<dbReference type="EnsemblPlants" id="AT1G25380.1">
    <property type="protein sequence ID" value="AT1G25380.1"/>
    <property type="gene ID" value="AT1G25380"/>
</dbReference>
<dbReference type="EnsemblPlants" id="AT1G25380.2">
    <property type="protein sequence ID" value="AT1G25380.2"/>
    <property type="gene ID" value="AT1G25380"/>
</dbReference>
<dbReference type="GeneID" id="839124"/>
<dbReference type="Gramene" id="AT1G25380.1">
    <property type="protein sequence ID" value="AT1G25380.1"/>
    <property type="gene ID" value="AT1G25380"/>
</dbReference>
<dbReference type="Gramene" id="AT1G25380.2">
    <property type="protein sequence ID" value="AT1G25380.2"/>
    <property type="gene ID" value="AT1G25380"/>
</dbReference>
<dbReference type="KEGG" id="ath:AT1G25380"/>
<dbReference type="Araport" id="AT1G25380"/>
<dbReference type="TAIR" id="AT1G25380">
    <property type="gene designation" value="NDT2"/>
</dbReference>
<dbReference type="eggNOG" id="KOG0757">
    <property type="taxonomic scope" value="Eukaryota"/>
</dbReference>
<dbReference type="HOGENOM" id="CLU_015166_6_4_1"/>
<dbReference type="InParanoid" id="Q8RWA5"/>
<dbReference type="OMA" id="GVESAWV"/>
<dbReference type="OrthoDB" id="10266426at2759"/>
<dbReference type="PhylomeDB" id="Q8RWA5"/>
<dbReference type="PRO" id="PR:Q8RWA5"/>
<dbReference type="Proteomes" id="UP000006548">
    <property type="component" value="Chromosome 1"/>
</dbReference>
<dbReference type="ExpressionAtlas" id="Q8RWA5">
    <property type="expression patterns" value="baseline and differential"/>
</dbReference>
<dbReference type="GO" id="GO:0031966">
    <property type="term" value="C:mitochondrial membrane"/>
    <property type="evidence" value="ECO:0007669"/>
    <property type="project" value="UniProtKB-SubCell"/>
</dbReference>
<dbReference type="GO" id="GO:0015297">
    <property type="term" value="F:antiporter activity"/>
    <property type="evidence" value="ECO:0007669"/>
    <property type="project" value="UniProtKB-KW"/>
</dbReference>
<dbReference type="GO" id="GO:0051724">
    <property type="term" value="F:NAD transmembrane transporter activity"/>
    <property type="evidence" value="ECO:0000314"/>
    <property type="project" value="TAIR"/>
</dbReference>
<dbReference type="GO" id="GO:0043132">
    <property type="term" value="P:NAD transport"/>
    <property type="evidence" value="ECO:0000314"/>
    <property type="project" value="TAIR"/>
</dbReference>
<dbReference type="FunFam" id="1.50.40.10:FF:000075">
    <property type="entry name" value="Nicotinamide adenine dinucleotide transporter 2, mitochondrial"/>
    <property type="match status" value="1"/>
</dbReference>
<dbReference type="Gene3D" id="1.50.40.10">
    <property type="entry name" value="Mitochondrial carrier domain"/>
    <property type="match status" value="1"/>
</dbReference>
<dbReference type="InterPro" id="IPR002067">
    <property type="entry name" value="Mit_carrier"/>
</dbReference>
<dbReference type="InterPro" id="IPR018108">
    <property type="entry name" value="Mitochondrial_sb/sol_carrier"/>
</dbReference>
<dbReference type="InterPro" id="IPR023395">
    <property type="entry name" value="Mt_carrier_dom_sf"/>
</dbReference>
<dbReference type="InterPro" id="IPR044712">
    <property type="entry name" value="SLC25A32-like"/>
</dbReference>
<dbReference type="PANTHER" id="PTHR45683">
    <property type="entry name" value="MITOCHONDRIAL NICOTINAMIDE ADENINE DINUCLEOTIDE TRANSPORTER 1-RELATED-RELATED"/>
    <property type="match status" value="1"/>
</dbReference>
<dbReference type="Pfam" id="PF00153">
    <property type="entry name" value="Mito_carr"/>
    <property type="match status" value="3"/>
</dbReference>
<dbReference type="PRINTS" id="PR00926">
    <property type="entry name" value="MITOCARRIER"/>
</dbReference>
<dbReference type="SUPFAM" id="SSF103506">
    <property type="entry name" value="Mitochondrial carrier"/>
    <property type="match status" value="1"/>
</dbReference>
<dbReference type="PROSITE" id="PS50920">
    <property type="entry name" value="SOLCAR"/>
    <property type="match status" value="3"/>
</dbReference>
<gene>
    <name type="primary">NDT2</name>
    <name type="synonym">NADT2</name>
    <name type="ordered locus">At1g25380</name>
    <name type="ORF">F4F7.45</name>
</gene>
<proteinExistence type="evidence at protein level"/>
<accession>Q8RWA5</accession>
<accession>Q4A3J5</accession>
<accession>Q9C6K8</accession>
<accession>Q9FRI7</accession>